<proteinExistence type="inferred from homology"/>
<comment type="function">
    <text evidence="1">Protease subunit of a proteasome-like degradation complex believed to be a general protein degrading machinery.</text>
</comment>
<comment type="catalytic activity">
    <reaction evidence="1">
        <text>ATP-dependent cleavage of peptide bonds with broad specificity.</text>
        <dbReference type="EC" id="3.4.25.2"/>
    </reaction>
</comment>
<comment type="activity regulation">
    <text evidence="1">Allosterically activated by HslU binding.</text>
</comment>
<comment type="subunit">
    <text evidence="1">A double ring-shaped homohexamer of HslV is capped on each side by a ring-shaped HslU homohexamer. The assembly of the HslU/HslV complex is dependent on binding of ATP.</text>
</comment>
<comment type="subcellular location">
    <subcellularLocation>
        <location evidence="1">Cytoplasm</location>
    </subcellularLocation>
</comment>
<comment type="similarity">
    <text evidence="1">Belongs to the peptidase T1B family. HslV subfamily.</text>
</comment>
<accession>Q6GHI2</accession>
<sequence length="181" mass="19572">MSNTTLHATTIYAVRHNGKAAMAGDGQVTLGQQVIMKQTARKVRRLYEGKVLAGFAGSVADAFTLFEKFETKLQQFSGNLERAAVELAQEWRGDKQLRQLEAMLIVMDKDAILVVSGTGEVIAPDDDLIAIGSGGNYALSAGRALKRHASHLSAEEMAYESLKVAADICVFTNDNIVVETL</sequence>
<gene>
    <name evidence="1" type="primary">hslV</name>
    <name type="ordered locus">SAR1229</name>
</gene>
<reference key="1">
    <citation type="journal article" date="2004" name="Proc. Natl. Acad. Sci. U.S.A.">
        <title>Complete genomes of two clinical Staphylococcus aureus strains: evidence for the rapid evolution of virulence and drug resistance.</title>
        <authorList>
            <person name="Holden M.T.G."/>
            <person name="Feil E.J."/>
            <person name="Lindsay J.A."/>
            <person name="Peacock S.J."/>
            <person name="Day N.P.J."/>
            <person name="Enright M.C."/>
            <person name="Foster T.J."/>
            <person name="Moore C.E."/>
            <person name="Hurst L."/>
            <person name="Atkin R."/>
            <person name="Barron A."/>
            <person name="Bason N."/>
            <person name="Bentley S.D."/>
            <person name="Chillingworth C."/>
            <person name="Chillingworth T."/>
            <person name="Churcher C."/>
            <person name="Clark L."/>
            <person name="Corton C."/>
            <person name="Cronin A."/>
            <person name="Doggett J."/>
            <person name="Dowd L."/>
            <person name="Feltwell T."/>
            <person name="Hance Z."/>
            <person name="Harris B."/>
            <person name="Hauser H."/>
            <person name="Holroyd S."/>
            <person name="Jagels K."/>
            <person name="James K.D."/>
            <person name="Lennard N."/>
            <person name="Line A."/>
            <person name="Mayes R."/>
            <person name="Moule S."/>
            <person name="Mungall K."/>
            <person name="Ormond D."/>
            <person name="Quail M.A."/>
            <person name="Rabbinowitsch E."/>
            <person name="Rutherford K.M."/>
            <person name="Sanders M."/>
            <person name="Sharp S."/>
            <person name="Simmonds M."/>
            <person name="Stevens K."/>
            <person name="Whitehead S."/>
            <person name="Barrell B.G."/>
            <person name="Spratt B.G."/>
            <person name="Parkhill J."/>
        </authorList>
    </citation>
    <scope>NUCLEOTIDE SEQUENCE [LARGE SCALE GENOMIC DNA]</scope>
    <source>
        <strain>MRSA252</strain>
    </source>
</reference>
<keyword id="KW-0021">Allosteric enzyme</keyword>
<keyword id="KW-0963">Cytoplasm</keyword>
<keyword id="KW-0378">Hydrolase</keyword>
<keyword id="KW-0479">Metal-binding</keyword>
<keyword id="KW-0645">Protease</keyword>
<keyword id="KW-0915">Sodium</keyword>
<keyword id="KW-0888">Threonine protease</keyword>
<protein>
    <recommendedName>
        <fullName evidence="1">ATP-dependent protease subunit HslV</fullName>
        <ecNumber evidence="1">3.4.25.2</ecNumber>
    </recommendedName>
</protein>
<feature type="chain" id="PRO_0000148149" description="ATP-dependent protease subunit HslV">
    <location>
        <begin position="1"/>
        <end position="181"/>
    </location>
</feature>
<feature type="active site" evidence="1">
    <location>
        <position position="9"/>
    </location>
</feature>
<feature type="binding site" evidence="1">
    <location>
        <position position="166"/>
    </location>
    <ligand>
        <name>Na(+)</name>
        <dbReference type="ChEBI" id="CHEBI:29101"/>
    </ligand>
</feature>
<feature type="binding site" evidence="1">
    <location>
        <position position="169"/>
    </location>
    <ligand>
        <name>Na(+)</name>
        <dbReference type="ChEBI" id="CHEBI:29101"/>
    </ligand>
</feature>
<feature type="binding site" evidence="1">
    <location>
        <position position="172"/>
    </location>
    <ligand>
        <name>Na(+)</name>
        <dbReference type="ChEBI" id="CHEBI:29101"/>
    </ligand>
</feature>
<organism>
    <name type="scientific">Staphylococcus aureus (strain MRSA252)</name>
    <dbReference type="NCBI Taxonomy" id="282458"/>
    <lineage>
        <taxon>Bacteria</taxon>
        <taxon>Bacillati</taxon>
        <taxon>Bacillota</taxon>
        <taxon>Bacilli</taxon>
        <taxon>Bacillales</taxon>
        <taxon>Staphylococcaceae</taxon>
        <taxon>Staphylococcus</taxon>
    </lineage>
</organism>
<evidence type="ECO:0000255" key="1">
    <source>
        <dbReference type="HAMAP-Rule" id="MF_00248"/>
    </source>
</evidence>
<name>HSLV_STAAR</name>
<dbReference type="EC" id="3.4.25.2" evidence="1"/>
<dbReference type="EMBL" id="BX571856">
    <property type="protein sequence ID" value="CAG40231.1"/>
    <property type="molecule type" value="Genomic_DNA"/>
</dbReference>
<dbReference type="RefSeq" id="WP_000072681.1">
    <property type="nucleotide sequence ID" value="NC_002952.2"/>
</dbReference>
<dbReference type="SMR" id="Q6GHI2"/>
<dbReference type="MEROPS" id="T01.007"/>
<dbReference type="KEGG" id="sar:SAR1229"/>
<dbReference type="HOGENOM" id="CLU_093872_1_1_9"/>
<dbReference type="Proteomes" id="UP000000596">
    <property type="component" value="Chromosome"/>
</dbReference>
<dbReference type="GO" id="GO:0009376">
    <property type="term" value="C:HslUV protease complex"/>
    <property type="evidence" value="ECO:0007669"/>
    <property type="project" value="UniProtKB-UniRule"/>
</dbReference>
<dbReference type="GO" id="GO:0005839">
    <property type="term" value="C:proteasome core complex"/>
    <property type="evidence" value="ECO:0007669"/>
    <property type="project" value="InterPro"/>
</dbReference>
<dbReference type="GO" id="GO:0046872">
    <property type="term" value="F:metal ion binding"/>
    <property type="evidence" value="ECO:0007669"/>
    <property type="project" value="UniProtKB-KW"/>
</dbReference>
<dbReference type="GO" id="GO:0004298">
    <property type="term" value="F:threonine-type endopeptidase activity"/>
    <property type="evidence" value="ECO:0007669"/>
    <property type="project" value="UniProtKB-KW"/>
</dbReference>
<dbReference type="GO" id="GO:0051603">
    <property type="term" value="P:proteolysis involved in protein catabolic process"/>
    <property type="evidence" value="ECO:0007669"/>
    <property type="project" value="InterPro"/>
</dbReference>
<dbReference type="CDD" id="cd01913">
    <property type="entry name" value="protease_HslV"/>
    <property type="match status" value="1"/>
</dbReference>
<dbReference type="Gene3D" id="3.60.20.10">
    <property type="entry name" value="Glutamine Phosphoribosylpyrophosphate, subunit 1, domain 1"/>
    <property type="match status" value="1"/>
</dbReference>
<dbReference type="HAMAP" id="MF_00248">
    <property type="entry name" value="HslV"/>
    <property type="match status" value="1"/>
</dbReference>
<dbReference type="InterPro" id="IPR022281">
    <property type="entry name" value="ATP-dep_Prtase_HsIV_su"/>
</dbReference>
<dbReference type="InterPro" id="IPR029055">
    <property type="entry name" value="Ntn_hydrolases_N"/>
</dbReference>
<dbReference type="InterPro" id="IPR001353">
    <property type="entry name" value="Proteasome_sua/b"/>
</dbReference>
<dbReference type="InterPro" id="IPR023333">
    <property type="entry name" value="Proteasome_suB-type"/>
</dbReference>
<dbReference type="NCBIfam" id="TIGR03692">
    <property type="entry name" value="ATP_dep_HslV"/>
    <property type="match status" value="1"/>
</dbReference>
<dbReference type="NCBIfam" id="NF003964">
    <property type="entry name" value="PRK05456.1"/>
    <property type="match status" value="1"/>
</dbReference>
<dbReference type="PANTHER" id="PTHR32194:SF0">
    <property type="entry name" value="ATP-DEPENDENT PROTEASE SUBUNIT HSLV"/>
    <property type="match status" value="1"/>
</dbReference>
<dbReference type="PANTHER" id="PTHR32194">
    <property type="entry name" value="METALLOPROTEASE TLDD"/>
    <property type="match status" value="1"/>
</dbReference>
<dbReference type="Pfam" id="PF00227">
    <property type="entry name" value="Proteasome"/>
    <property type="match status" value="1"/>
</dbReference>
<dbReference type="PIRSF" id="PIRSF039093">
    <property type="entry name" value="HslV"/>
    <property type="match status" value="1"/>
</dbReference>
<dbReference type="SUPFAM" id="SSF56235">
    <property type="entry name" value="N-terminal nucleophile aminohydrolases (Ntn hydrolases)"/>
    <property type="match status" value="1"/>
</dbReference>
<dbReference type="PROSITE" id="PS51476">
    <property type="entry name" value="PROTEASOME_BETA_2"/>
    <property type="match status" value="1"/>
</dbReference>